<sequence>MDDLETLDFRELERELANALAADQKYSRENDAKFRAIHQKVASYEEFRDIVLASNLKPLERKDKVGGESKQPWNPSFNTTNCTQKSEDVMLKKSLSDPTNAFEFARDWRRLGNVEKYDFLLQLGAEKLSQLFHAEVCSGLLGEFLLVLSESFQAIHVEKVLKILQTLAETKRFDLNLIFISRSEVESSQKLFGKLQTCVGAMKDEKRGLGDENLRKLMACYKISC</sequence>
<gene>
    <name type="primary">dnaaf19</name>
    <name type="synonym">ccdc103</name>
    <name type="ORF">TNeu101c05.1</name>
</gene>
<dbReference type="EMBL" id="CR760363">
    <property type="protein sequence ID" value="CAJ82355.1"/>
    <property type="molecule type" value="mRNA"/>
</dbReference>
<dbReference type="EMBL" id="AAMC01047356">
    <property type="status" value="NOT_ANNOTATED_CDS"/>
    <property type="molecule type" value="Genomic_DNA"/>
</dbReference>
<dbReference type="EMBL" id="BC086501">
    <property type="protein sequence ID" value="AAH86501.1"/>
    <property type="status" value="ALT_INIT"/>
    <property type="molecule type" value="mRNA"/>
</dbReference>
<dbReference type="EMBL" id="BC135828">
    <property type="protein sequence ID" value="AAI35829.1"/>
    <property type="molecule type" value="mRNA"/>
</dbReference>
<dbReference type="RefSeq" id="NP_001034822.1">
    <property type="nucleotide sequence ID" value="NM_001039733.1"/>
</dbReference>
<dbReference type="RefSeq" id="XP_012827165.1">
    <property type="nucleotide sequence ID" value="XM_012971711.2"/>
</dbReference>
<dbReference type="SMR" id="Q5RJU3"/>
<dbReference type="FunCoup" id="Q5RJU3">
    <property type="interactions" value="60"/>
</dbReference>
<dbReference type="STRING" id="8364.ENSXETP00000007503"/>
<dbReference type="PaxDb" id="8364-ENSXETP00000007378"/>
<dbReference type="GeneID" id="496703"/>
<dbReference type="KEGG" id="xtr:496703"/>
<dbReference type="AGR" id="Xenbase:XB-GENE-922050"/>
<dbReference type="CTD" id="388389"/>
<dbReference type="Xenbase" id="XB-GENE-922050">
    <property type="gene designation" value="dnaaf19"/>
</dbReference>
<dbReference type="eggNOG" id="ENOG502RY3P">
    <property type="taxonomic scope" value="Eukaryota"/>
</dbReference>
<dbReference type="HOGENOM" id="CLU_085512_0_0_1"/>
<dbReference type="InParanoid" id="Q5RJU3"/>
<dbReference type="OMA" id="YRNWRRH"/>
<dbReference type="OrthoDB" id="447931at2759"/>
<dbReference type="TreeFam" id="TF324467"/>
<dbReference type="Proteomes" id="UP000008143">
    <property type="component" value="Chromosome 10"/>
</dbReference>
<dbReference type="GO" id="GO:0031514">
    <property type="term" value="C:motile cilium"/>
    <property type="evidence" value="ECO:0007669"/>
    <property type="project" value="UniProtKB-SubCell"/>
</dbReference>
<dbReference type="GO" id="GO:0036157">
    <property type="term" value="C:outer dynein arm"/>
    <property type="evidence" value="ECO:0007669"/>
    <property type="project" value="InterPro"/>
</dbReference>
<dbReference type="GO" id="GO:0070286">
    <property type="term" value="P:axonemal dynein complex assembly"/>
    <property type="evidence" value="ECO:0007669"/>
    <property type="project" value="InterPro"/>
</dbReference>
<dbReference type="InterPro" id="IPR042422">
    <property type="entry name" value="CC103"/>
</dbReference>
<dbReference type="InterPro" id="IPR031733">
    <property type="entry name" value="Dynein_attach_N"/>
</dbReference>
<dbReference type="InterPro" id="IPR025986">
    <property type="entry name" value="RPAP3-like_C"/>
</dbReference>
<dbReference type="PANTHER" id="PTHR28572">
    <property type="entry name" value="COILED-COIL DOMAIN-CONTAINING PROTEIN 103"/>
    <property type="match status" value="1"/>
</dbReference>
<dbReference type="PANTHER" id="PTHR28572:SF1">
    <property type="entry name" value="COILED-COIL DOMAIN-CONTAINING PROTEIN 103"/>
    <property type="match status" value="1"/>
</dbReference>
<dbReference type="Pfam" id="PF15867">
    <property type="entry name" value="Dynein_attach_N"/>
    <property type="match status" value="1"/>
</dbReference>
<dbReference type="Pfam" id="PF13877">
    <property type="entry name" value="RPAP3_C"/>
    <property type="match status" value="1"/>
</dbReference>
<evidence type="ECO:0000250" key="1"/>
<evidence type="ECO:0000250" key="2">
    <source>
        <dbReference type="UniProtKB" id="Q6DGB6"/>
    </source>
</evidence>
<evidence type="ECO:0000255" key="3"/>
<evidence type="ECO:0000305" key="4"/>
<reference key="1">
    <citation type="submission" date="2006-10" db="EMBL/GenBank/DDBJ databases">
        <authorList>
            <consortium name="Sanger Xenopus tropicalis EST/cDNA project"/>
        </authorList>
    </citation>
    <scope>NUCLEOTIDE SEQUENCE [LARGE SCALE MRNA]</scope>
    <source>
        <tissue>Neurula</tissue>
    </source>
</reference>
<reference key="2">
    <citation type="journal article" date="2010" name="Science">
        <title>The genome of the Western clawed frog Xenopus tropicalis.</title>
        <authorList>
            <person name="Hellsten U."/>
            <person name="Harland R.M."/>
            <person name="Gilchrist M.J."/>
            <person name="Hendrix D."/>
            <person name="Jurka J."/>
            <person name="Kapitonov V."/>
            <person name="Ovcharenko I."/>
            <person name="Putnam N.H."/>
            <person name="Shu S."/>
            <person name="Taher L."/>
            <person name="Blitz I.L."/>
            <person name="Blumberg B."/>
            <person name="Dichmann D.S."/>
            <person name="Dubchak I."/>
            <person name="Amaya E."/>
            <person name="Detter J.C."/>
            <person name="Fletcher R."/>
            <person name="Gerhard D.S."/>
            <person name="Goodstein D."/>
            <person name="Graves T."/>
            <person name="Grigoriev I.V."/>
            <person name="Grimwood J."/>
            <person name="Kawashima T."/>
            <person name="Lindquist E."/>
            <person name="Lucas S.M."/>
            <person name="Mead P.E."/>
            <person name="Mitros T."/>
            <person name="Ogino H."/>
            <person name="Ohta Y."/>
            <person name="Poliakov A.V."/>
            <person name="Pollet N."/>
            <person name="Robert J."/>
            <person name="Salamov A."/>
            <person name="Sater A.K."/>
            <person name="Schmutz J."/>
            <person name="Terry A."/>
            <person name="Vize P.D."/>
            <person name="Warren W.C."/>
            <person name="Wells D."/>
            <person name="Wills A."/>
            <person name="Wilson R.K."/>
            <person name="Zimmerman L.B."/>
            <person name="Zorn A.M."/>
            <person name="Grainger R."/>
            <person name="Grammer T."/>
            <person name="Khokha M.K."/>
            <person name="Richardson P.M."/>
            <person name="Rokhsar D.S."/>
        </authorList>
    </citation>
    <scope>NUCLEOTIDE SEQUENCE [LARGE SCALE GENOMIC DNA]</scope>
</reference>
<reference key="3">
    <citation type="submission" date="2004-11" db="EMBL/GenBank/DDBJ databases">
        <authorList>
            <consortium name="NIH - Xenopus Gene Collection (XGC) project"/>
        </authorList>
    </citation>
    <scope>NUCLEOTIDE SEQUENCE [LARGE SCALE MRNA]</scope>
    <source>
        <tissue>Embryo</tissue>
    </source>
</reference>
<protein>
    <recommendedName>
        <fullName>Dynein axonemal assembly factor 19</fullName>
    </recommendedName>
    <alternativeName>
        <fullName>Coiled-coil domain-containing protein 103</fullName>
    </alternativeName>
</protein>
<accession>Q5RJU3</accession>
<accession>Q28IJ1</accession>
<feature type="chain" id="PRO_0000419463" description="Dynein axonemal assembly factor 19">
    <location>
        <begin position="1"/>
        <end position="225"/>
    </location>
</feature>
<feature type="coiled-coil region" evidence="3">
    <location>
        <begin position="8"/>
        <end position="32"/>
    </location>
</feature>
<comment type="function">
    <text evidence="1">Dynein-attachment factor required for cilia motility.</text>
</comment>
<comment type="subunit">
    <text evidence="1">Homodimer.</text>
</comment>
<comment type="subcellular location">
    <subcellularLocation>
        <location evidence="2">Cytoplasm</location>
    </subcellularLocation>
    <subcellularLocation>
        <location evidence="2">Cell projection</location>
        <location evidence="2">Cilium</location>
        <location evidence="2">Flagellum</location>
    </subcellularLocation>
</comment>
<comment type="similarity">
    <text evidence="4">Belongs to the DNAAF19/PR46b family.</text>
</comment>
<comment type="sequence caution" evidence="4">
    <conflict type="erroneous initiation">
        <sequence resource="EMBL-CDS" id="AAH86501"/>
    </conflict>
    <text>Extended N-terminus.</text>
</comment>
<organism>
    <name type="scientific">Xenopus tropicalis</name>
    <name type="common">Western clawed frog</name>
    <name type="synonym">Silurana tropicalis</name>
    <dbReference type="NCBI Taxonomy" id="8364"/>
    <lineage>
        <taxon>Eukaryota</taxon>
        <taxon>Metazoa</taxon>
        <taxon>Chordata</taxon>
        <taxon>Craniata</taxon>
        <taxon>Vertebrata</taxon>
        <taxon>Euteleostomi</taxon>
        <taxon>Amphibia</taxon>
        <taxon>Batrachia</taxon>
        <taxon>Anura</taxon>
        <taxon>Pipoidea</taxon>
        <taxon>Pipidae</taxon>
        <taxon>Xenopodinae</taxon>
        <taxon>Xenopus</taxon>
        <taxon>Silurana</taxon>
    </lineage>
</organism>
<proteinExistence type="evidence at transcript level"/>
<name>DAA19_XENTR</name>
<keyword id="KW-0966">Cell projection</keyword>
<keyword id="KW-0969">Cilium</keyword>
<keyword id="KW-0970">Cilium biogenesis/degradation</keyword>
<keyword id="KW-0175">Coiled coil</keyword>
<keyword id="KW-0963">Cytoplasm</keyword>
<keyword id="KW-0282">Flagellum</keyword>
<keyword id="KW-1185">Reference proteome</keyword>